<evidence type="ECO:0000255" key="1"/>
<evidence type="ECO:0000305" key="2"/>
<organism>
    <name type="scientific">Bacillus subtilis (strain 168)</name>
    <dbReference type="NCBI Taxonomy" id="224308"/>
    <lineage>
        <taxon>Bacteria</taxon>
        <taxon>Bacillati</taxon>
        <taxon>Bacillota</taxon>
        <taxon>Bacilli</taxon>
        <taxon>Bacillales</taxon>
        <taxon>Bacillaceae</taxon>
        <taxon>Bacillus</taxon>
    </lineage>
</organism>
<accession>O32270</accession>
<feature type="chain" id="PRO_0000065691" description="Teichuronic acid biosynthesis protein TuaE">
    <location>
        <begin position="1"/>
        <end position="488"/>
    </location>
</feature>
<feature type="transmembrane region" description="Helical" evidence="1">
    <location>
        <begin position="7"/>
        <end position="29"/>
    </location>
</feature>
<feature type="transmembrane region" description="Helical" evidence="1">
    <location>
        <begin position="35"/>
        <end position="57"/>
    </location>
</feature>
<feature type="transmembrane region" description="Helical" evidence="1">
    <location>
        <begin position="64"/>
        <end position="86"/>
    </location>
</feature>
<feature type="transmembrane region" description="Helical" evidence="1">
    <location>
        <begin position="91"/>
        <end position="110"/>
    </location>
</feature>
<feature type="transmembrane region" description="Helical" evidence="1">
    <location>
        <begin position="122"/>
        <end position="144"/>
    </location>
</feature>
<feature type="transmembrane region" description="Helical" evidence="1">
    <location>
        <begin position="154"/>
        <end position="173"/>
    </location>
</feature>
<feature type="transmembrane region" description="Helical" evidence="1">
    <location>
        <begin position="180"/>
        <end position="202"/>
    </location>
</feature>
<feature type="transmembrane region" description="Helical" evidence="1">
    <location>
        <begin position="222"/>
        <end position="244"/>
    </location>
</feature>
<feature type="transmembrane region" description="Helical" evidence="1">
    <location>
        <begin position="257"/>
        <end position="274"/>
    </location>
</feature>
<feature type="transmembrane region" description="Helical" evidence="1">
    <location>
        <begin position="279"/>
        <end position="298"/>
    </location>
</feature>
<feature type="transmembrane region" description="Helical" evidence="1">
    <location>
        <begin position="303"/>
        <end position="322"/>
    </location>
</feature>
<feature type="transmembrane region" description="Helical" evidence="1">
    <location>
        <begin position="354"/>
        <end position="376"/>
    </location>
</feature>
<feature type="transmembrane region" description="Helical" evidence="1">
    <location>
        <begin position="397"/>
        <end position="419"/>
    </location>
</feature>
<feature type="transmembrane region" description="Helical" evidence="1">
    <location>
        <begin position="459"/>
        <end position="476"/>
    </location>
</feature>
<name>TUAE_BACSU</name>
<protein>
    <recommendedName>
        <fullName>Teichuronic acid biosynthesis protein TuaE</fullName>
    </recommendedName>
</protein>
<gene>
    <name type="primary">tuaE</name>
    <name type="synonym">yvhE</name>
    <name type="ordered locus">BSU35570</name>
</gene>
<dbReference type="EMBL" id="AF015609">
    <property type="protein sequence ID" value="AAB94866.1"/>
    <property type="molecule type" value="Genomic_DNA"/>
</dbReference>
<dbReference type="EMBL" id="AL009126">
    <property type="protein sequence ID" value="CAB15574.1"/>
    <property type="molecule type" value="Genomic_DNA"/>
</dbReference>
<dbReference type="PIR" id="G69727">
    <property type="entry name" value="G69727"/>
</dbReference>
<dbReference type="RefSeq" id="NP_391437.1">
    <property type="nucleotide sequence ID" value="NC_000964.3"/>
</dbReference>
<dbReference type="RefSeq" id="WP_010886625.1">
    <property type="nucleotide sequence ID" value="NZ_OZ025638.1"/>
</dbReference>
<dbReference type="FunCoup" id="O32270">
    <property type="interactions" value="10"/>
</dbReference>
<dbReference type="STRING" id="224308.BSU35570"/>
<dbReference type="jPOST" id="O32270"/>
<dbReference type="PaxDb" id="224308-BSU35570"/>
<dbReference type="EnsemblBacteria" id="CAB15574">
    <property type="protein sequence ID" value="CAB15574"/>
    <property type="gene ID" value="BSU_35570"/>
</dbReference>
<dbReference type="GeneID" id="936765"/>
<dbReference type="KEGG" id="bsu:BSU35570"/>
<dbReference type="PATRIC" id="fig|224308.179.peg.3848"/>
<dbReference type="eggNOG" id="COG3307">
    <property type="taxonomic scope" value="Bacteria"/>
</dbReference>
<dbReference type="InParanoid" id="O32270"/>
<dbReference type="OrthoDB" id="9255580at2"/>
<dbReference type="BioCyc" id="BSUB:BSU35570-MONOMER"/>
<dbReference type="BioCyc" id="MetaCyc:BSU35570-MONOMER"/>
<dbReference type="UniPathway" id="UPA00844"/>
<dbReference type="Proteomes" id="UP000001570">
    <property type="component" value="Chromosome"/>
</dbReference>
<dbReference type="GO" id="GO:0005886">
    <property type="term" value="C:plasma membrane"/>
    <property type="evidence" value="ECO:0007669"/>
    <property type="project" value="UniProtKB-SubCell"/>
</dbReference>
<dbReference type="GO" id="GO:0071555">
    <property type="term" value="P:cell wall organization"/>
    <property type="evidence" value="ECO:0007669"/>
    <property type="project" value="UniProtKB-KW"/>
</dbReference>
<dbReference type="GO" id="GO:0050845">
    <property type="term" value="P:teichuronic acid biosynthetic process"/>
    <property type="evidence" value="ECO:0007669"/>
    <property type="project" value="UniProtKB-UniPathway"/>
</dbReference>
<dbReference type="InterPro" id="IPR007016">
    <property type="entry name" value="O-antigen_ligase-rel_domated"/>
</dbReference>
<dbReference type="InterPro" id="IPR051533">
    <property type="entry name" value="WaaL-like"/>
</dbReference>
<dbReference type="NCBIfam" id="NF047675">
    <property type="entry name" value="TeichurnBiosyTuaE"/>
    <property type="match status" value="1"/>
</dbReference>
<dbReference type="PANTHER" id="PTHR37422">
    <property type="entry name" value="TEICHURONIC ACID BIOSYNTHESIS PROTEIN TUAE"/>
    <property type="match status" value="1"/>
</dbReference>
<dbReference type="PANTHER" id="PTHR37422:SF23">
    <property type="entry name" value="TEICHURONIC ACID BIOSYNTHESIS PROTEIN TUAE"/>
    <property type="match status" value="1"/>
</dbReference>
<dbReference type="Pfam" id="PF04932">
    <property type="entry name" value="Wzy_C"/>
    <property type="match status" value="1"/>
</dbReference>
<comment type="function">
    <text>Might be involved in the polymerization of teichuronic acid repeating units after their translocation to the outer surface of the membrane.</text>
</comment>
<comment type="pathway">
    <text>Cell wall biogenesis; teichuronic acid biosynthesis.</text>
</comment>
<comment type="subcellular location">
    <subcellularLocation>
        <location evidence="2">Cell membrane</location>
        <topology evidence="2">Multi-pass membrane protein</topology>
    </subcellularLocation>
</comment>
<comment type="induction">
    <text>By phosphate starvation, via the PhoP/PhoR two-component regulatory system.</text>
</comment>
<comment type="miscellaneous">
    <text>The nature of the anionic polymer present in the cell wall of B.subtilis depends on phosphate availability. Under phosphate-replete growth conditions teichoic acids are present, whereas under phosphate-depleted conditions, at least part of the wall teichoic acid is replaced with teichuronic acid, a non-phosphate containing anionic polymer. The synthesis of teichuronic acid is accompanied by degradation of teichoic acid and reutilization of liberated phosphate for other cellular processes such as nucleic acid synthesis.</text>
</comment>
<keyword id="KW-1003">Cell membrane</keyword>
<keyword id="KW-0961">Cell wall biogenesis/degradation</keyword>
<keyword id="KW-0472">Membrane</keyword>
<keyword id="KW-1185">Reference proteome</keyword>
<keyword id="KW-0346">Stress response</keyword>
<keyword id="KW-0812">Transmembrane</keyword>
<keyword id="KW-1133">Transmembrane helix</keyword>
<reference key="1">
    <citation type="journal article" date="1999" name="Mol. Microbiol.">
        <title>Teichuronic acid operon of Bacillus subtilis 168.</title>
        <authorList>
            <person name="Soldo B."/>
            <person name="Lazarevic V."/>
            <person name="Pagni M."/>
            <person name="Karamata D."/>
        </authorList>
    </citation>
    <scope>NUCLEOTIDE SEQUENCE [GENOMIC DNA]</scope>
    <scope>PUTATIVE FUNCTION</scope>
    <source>
        <strain>168</strain>
    </source>
</reference>
<reference key="2">
    <citation type="journal article" date="1997" name="Nature">
        <title>The complete genome sequence of the Gram-positive bacterium Bacillus subtilis.</title>
        <authorList>
            <person name="Kunst F."/>
            <person name="Ogasawara N."/>
            <person name="Moszer I."/>
            <person name="Albertini A.M."/>
            <person name="Alloni G."/>
            <person name="Azevedo V."/>
            <person name="Bertero M.G."/>
            <person name="Bessieres P."/>
            <person name="Bolotin A."/>
            <person name="Borchert S."/>
            <person name="Borriss R."/>
            <person name="Boursier L."/>
            <person name="Brans A."/>
            <person name="Braun M."/>
            <person name="Brignell S.C."/>
            <person name="Bron S."/>
            <person name="Brouillet S."/>
            <person name="Bruschi C.V."/>
            <person name="Caldwell B."/>
            <person name="Capuano V."/>
            <person name="Carter N.M."/>
            <person name="Choi S.-K."/>
            <person name="Codani J.-J."/>
            <person name="Connerton I.F."/>
            <person name="Cummings N.J."/>
            <person name="Daniel R.A."/>
            <person name="Denizot F."/>
            <person name="Devine K.M."/>
            <person name="Duesterhoeft A."/>
            <person name="Ehrlich S.D."/>
            <person name="Emmerson P.T."/>
            <person name="Entian K.-D."/>
            <person name="Errington J."/>
            <person name="Fabret C."/>
            <person name="Ferrari E."/>
            <person name="Foulger D."/>
            <person name="Fritz C."/>
            <person name="Fujita M."/>
            <person name="Fujita Y."/>
            <person name="Fuma S."/>
            <person name="Galizzi A."/>
            <person name="Galleron N."/>
            <person name="Ghim S.-Y."/>
            <person name="Glaser P."/>
            <person name="Goffeau A."/>
            <person name="Golightly E.J."/>
            <person name="Grandi G."/>
            <person name="Guiseppi G."/>
            <person name="Guy B.J."/>
            <person name="Haga K."/>
            <person name="Haiech J."/>
            <person name="Harwood C.R."/>
            <person name="Henaut A."/>
            <person name="Hilbert H."/>
            <person name="Holsappel S."/>
            <person name="Hosono S."/>
            <person name="Hullo M.-F."/>
            <person name="Itaya M."/>
            <person name="Jones L.-M."/>
            <person name="Joris B."/>
            <person name="Karamata D."/>
            <person name="Kasahara Y."/>
            <person name="Klaerr-Blanchard M."/>
            <person name="Klein C."/>
            <person name="Kobayashi Y."/>
            <person name="Koetter P."/>
            <person name="Koningstein G."/>
            <person name="Krogh S."/>
            <person name="Kumano M."/>
            <person name="Kurita K."/>
            <person name="Lapidus A."/>
            <person name="Lardinois S."/>
            <person name="Lauber J."/>
            <person name="Lazarevic V."/>
            <person name="Lee S.-M."/>
            <person name="Levine A."/>
            <person name="Liu H."/>
            <person name="Masuda S."/>
            <person name="Mauel C."/>
            <person name="Medigue C."/>
            <person name="Medina N."/>
            <person name="Mellado R.P."/>
            <person name="Mizuno M."/>
            <person name="Moestl D."/>
            <person name="Nakai S."/>
            <person name="Noback M."/>
            <person name="Noone D."/>
            <person name="O'Reilly M."/>
            <person name="Ogawa K."/>
            <person name="Ogiwara A."/>
            <person name="Oudega B."/>
            <person name="Park S.-H."/>
            <person name="Parro V."/>
            <person name="Pohl T.M."/>
            <person name="Portetelle D."/>
            <person name="Porwollik S."/>
            <person name="Prescott A.M."/>
            <person name="Presecan E."/>
            <person name="Pujic P."/>
            <person name="Purnelle B."/>
            <person name="Rapoport G."/>
            <person name="Rey M."/>
            <person name="Reynolds S."/>
            <person name="Rieger M."/>
            <person name="Rivolta C."/>
            <person name="Rocha E."/>
            <person name="Roche B."/>
            <person name="Rose M."/>
            <person name="Sadaie Y."/>
            <person name="Sato T."/>
            <person name="Scanlan E."/>
            <person name="Schleich S."/>
            <person name="Schroeter R."/>
            <person name="Scoffone F."/>
            <person name="Sekiguchi J."/>
            <person name="Sekowska A."/>
            <person name="Seror S.J."/>
            <person name="Serror P."/>
            <person name="Shin B.-S."/>
            <person name="Soldo B."/>
            <person name="Sorokin A."/>
            <person name="Tacconi E."/>
            <person name="Takagi T."/>
            <person name="Takahashi H."/>
            <person name="Takemaru K."/>
            <person name="Takeuchi M."/>
            <person name="Tamakoshi A."/>
            <person name="Tanaka T."/>
            <person name="Terpstra P."/>
            <person name="Tognoni A."/>
            <person name="Tosato V."/>
            <person name="Uchiyama S."/>
            <person name="Vandenbol M."/>
            <person name="Vannier F."/>
            <person name="Vassarotti A."/>
            <person name="Viari A."/>
            <person name="Wambutt R."/>
            <person name="Wedler E."/>
            <person name="Wedler H."/>
            <person name="Weitzenegger T."/>
            <person name="Winters P."/>
            <person name="Wipat A."/>
            <person name="Yamamoto H."/>
            <person name="Yamane K."/>
            <person name="Yasumoto K."/>
            <person name="Yata K."/>
            <person name="Yoshida K."/>
            <person name="Yoshikawa H.-F."/>
            <person name="Zumstein E."/>
            <person name="Yoshikawa H."/>
            <person name="Danchin A."/>
        </authorList>
    </citation>
    <scope>NUCLEOTIDE SEQUENCE [LARGE SCALE GENOMIC DNA]</scope>
    <source>
        <strain>168</strain>
    </source>
</reference>
<proteinExistence type="evidence at transcript level"/>
<sequence length="488" mass="55536">MSIKRSAVHTLALLAAAIFGVVLLLGAIHKDIGFMQMAAVLAVLAIGLFLLTLATAFTTKERLFMAVIYILIACTFLNNAFFAIHLGFFSLFLYRLLLIAAGCLHIFGMVRNRTHIERWHGLQVKGILLFFAFWFIYGLVSLLWAKSVTVGLKYLALLAMGIFFIYLIVMYVQKMERLMIVYAIWLVMTVFLMIIGFYNHITHHHLASSTLYSGPEYKQHYPTSVFFNQNDFATFLSISFFFYITMMKNIKNGYIKAIGLVLSLCALYLIFATGSRASLLGIFAGIAVYIFIVLPPVLKRMAIWLSAAGIALFAVLFASKIYSKFWELFLAPQTLHSFHDRLPSNVARANLLKNAWHFFLDSYGFGVGAGNVSYYLEHYAVYDTDNVAEVHNWLVEILANFGLFIMLGYLSVYAYLIWVLYKFYERKLENQSKLITEGLITAMVSFLVSSISPSSVSNLFFHWVFMALVIAAVNVLRRSRQMPEPMYR</sequence>